<protein>
    <recommendedName>
        <fullName evidence="1">Vacuolar membrane protease</fullName>
        <ecNumber evidence="6">3.4.-.-</ecNumber>
    </recommendedName>
    <alternativeName>
        <fullName evidence="1">FXNA-related family protease 1</fullName>
    </alternativeName>
</protein>
<reference key="1">
    <citation type="journal article" date="2008" name="PLoS Genet.">
        <title>Genomic islands in the pathogenic filamentous fungus Aspergillus fumigatus.</title>
        <authorList>
            <person name="Fedorova N.D."/>
            <person name="Khaldi N."/>
            <person name="Joardar V.S."/>
            <person name="Maiti R."/>
            <person name="Amedeo P."/>
            <person name="Anderson M.J."/>
            <person name="Crabtree J."/>
            <person name="Silva J.C."/>
            <person name="Badger J.H."/>
            <person name="Albarraq A."/>
            <person name="Angiuoli S."/>
            <person name="Bussey H."/>
            <person name="Bowyer P."/>
            <person name="Cotty P.J."/>
            <person name="Dyer P.S."/>
            <person name="Egan A."/>
            <person name="Galens K."/>
            <person name="Fraser-Liggett C.M."/>
            <person name="Haas B.J."/>
            <person name="Inman J.M."/>
            <person name="Kent R."/>
            <person name="Lemieux S."/>
            <person name="Malavazi I."/>
            <person name="Orvis J."/>
            <person name="Roemer T."/>
            <person name="Ronning C.M."/>
            <person name="Sundaram J.P."/>
            <person name="Sutton G."/>
            <person name="Turner G."/>
            <person name="Venter J.C."/>
            <person name="White O.R."/>
            <person name="Whitty B.R."/>
            <person name="Youngman P."/>
            <person name="Wolfe K.H."/>
            <person name="Goldman G.H."/>
            <person name="Wortman J.R."/>
            <person name="Jiang B."/>
            <person name="Denning D.W."/>
            <person name="Nierman W.C."/>
        </authorList>
    </citation>
    <scope>NUCLEOTIDE SEQUENCE [LARGE SCALE GENOMIC DNA]</scope>
    <source>
        <strain>CBS 144.89 / FGSC A1163 / CEA10</strain>
    </source>
</reference>
<keyword id="KW-0325">Glycoprotein</keyword>
<keyword id="KW-0378">Hydrolase</keyword>
<keyword id="KW-0472">Membrane</keyword>
<keyword id="KW-0479">Metal-binding</keyword>
<keyword id="KW-0482">Metalloprotease</keyword>
<keyword id="KW-0645">Protease</keyword>
<keyword id="KW-0812">Transmembrane</keyword>
<keyword id="KW-1133">Transmembrane helix</keyword>
<keyword id="KW-0926">Vacuole</keyword>
<keyword id="KW-0862">Zinc</keyword>
<evidence type="ECO:0000250" key="1">
    <source>
        <dbReference type="UniProtKB" id="P38244"/>
    </source>
</evidence>
<evidence type="ECO:0000250" key="2">
    <source>
        <dbReference type="UniProtKB" id="P80561"/>
    </source>
</evidence>
<evidence type="ECO:0000255" key="3"/>
<evidence type="ECO:0000255" key="4">
    <source>
        <dbReference type="PROSITE-ProRule" id="PRU00498"/>
    </source>
</evidence>
<evidence type="ECO:0000256" key="5">
    <source>
        <dbReference type="SAM" id="MobiDB-lite"/>
    </source>
</evidence>
<evidence type="ECO:0000305" key="6"/>
<comment type="function">
    <text evidence="1">May be involved in vacuolar sorting and osmoregulation.</text>
</comment>
<comment type="cofactor">
    <cofactor evidence="2">
        <name>Zn(2+)</name>
        <dbReference type="ChEBI" id="CHEBI:29105"/>
    </cofactor>
    <text evidence="2">Binds 2 Zn(2+) ions per subunit.</text>
</comment>
<comment type="subcellular location">
    <subcellularLocation>
        <location evidence="1">Vacuole membrane</location>
        <topology evidence="3">Multi-pass membrane protein</topology>
    </subcellularLocation>
</comment>
<comment type="similarity">
    <text evidence="6">Belongs to the peptidase M28 family.</text>
</comment>
<dbReference type="EC" id="3.4.-.-" evidence="6"/>
<dbReference type="EMBL" id="DS499594">
    <property type="protein sequence ID" value="EDP55933.1"/>
    <property type="molecule type" value="Genomic_DNA"/>
</dbReference>
<dbReference type="SMR" id="B0XPG0"/>
<dbReference type="EnsemblFungi" id="EDP55933">
    <property type="protein sequence ID" value="EDP55933"/>
    <property type="gene ID" value="AFUB_006350"/>
</dbReference>
<dbReference type="VEuPathDB" id="FungiDB:AFUB_006350"/>
<dbReference type="HOGENOM" id="CLU_006412_1_0_1"/>
<dbReference type="OrthoDB" id="116291at5052"/>
<dbReference type="PhylomeDB" id="B0XPG0"/>
<dbReference type="Proteomes" id="UP000001699">
    <property type="component" value="Unassembled WGS sequence"/>
</dbReference>
<dbReference type="GO" id="GO:0005774">
    <property type="term" value="C:vacuolar membrane"/>
    <property type="evidence" value="ECO:0007669"/>
    <property type="project" value="UniProtKB-SubCell"/>
</dbReference>
<dbReference type="GO" id="GO:0046872">
    <property type="term" value="F:metal ion binding"/>
    <property type="evidence" value="ECO:0007669"/>
    <property type="project" value="UniProtKB-KW"/>
</dbReference>
<dbReference type="GO" id="GO:0008235">
    <property type="term" value="F:metalloexopeptidase activity"/>
    <property type="evidence" value="ECO:0007669"/>
    <property type="project" value="InterPro"/>
</dbReference>
<dbReference type="GO" id="GO:0006508">
    <property type="term" value="P:proteolysis"/>
    <property type="evidence" value="ECO:0007669"/>
    <property type="project" value="UniProtKB-KW"/>
</dbReference>
<dbReference type="CDD" id="cd03875">
    <property type="entry name" value="M28_Fxna_like"/>
    <property type="match status" value="1"/>
</dbReference>
<dbReference type="FunFam" id="3.40.630.10:FF:000057">
    <property type="entry name" value="Vacuolar membrane protease"/>
    <property type="match status" value="1"/>
</dbReference>
<dbReference type="Gene3D" id="3.40.630.10">
    <property type="entry name" value="Zn peptidases"/>
    <property type="match status" value="1"/>
</dbReference>
<dbReference type="InterPro" id="IPR048024">
    <property type="entry name" value="Fxna-like_M28_dom"/>
</dbReference>
<dbReference type="InterPro" id="IPR045175">
    <property type="entry name" value="M28_fam"/>
</dbReference>
<dbReference type="InterPro" id="IPR007484">
    <property type="entry name" value="Peptidase_M28"/>
</dbReference>
<dbReference type="InterPro" id="IPR053975">
    <property type="entry name" value="PFF1_C"/>
</dbReference>
<dbReference type="InterPro" id="IPR053976">
    <property type="entry name" value="PFF1_TM"/>
</dbReference>
<dbReference type="PANTHER" id="PTHR12147">
    <property type="entry name" value="METALLOPEPTIDASE M28 FAMILY MEMBER"/>
    <property type="match status" value="1"/>
</dbReference>
<dbReference type="PANTHER" id="PTHR12147:SF58">
    <property type="entry name" value="VACUOLAR MEMBRANE PROTEASE"/>
    <property type="match status" value="1"/>
</dbReference>
<dbReference type="Pfam" id="PF04389">
    <property type="entry name" value="Peptidase_M28"/>
    <property type="match status" value="1"/>
</dbReference>
<dbReference type="Pfam" id="PF22250">
    <property type="entry name" value="PFF1_C"/>
    <property type="match status" value="1"/>
</dbReference>
<dbReference type="Pfam" id="PF22251">
    <property type="entry name" value="PFF1_TM"/>
    <property type="match status" value="1"/>
</dbReference>
<dbReference type="SUPFAM" id="SSF53187">
    <property type="entry name" value="Zn-dependent exopeptidases"/>
    <property type="match status" value="1"/>
</dbReference>
<accession>B0XPG0</accession>
<feature type="chain" id="PRO_0000411699" description="Vacuolar membrane protease">
    <location>
        <begin position="1"/>
        <end position="965"/>
    </location>
</feature>
<feature type="topological domain" description="Cytoplasmic" evidence="1">
    <location>
        <begin position="1"/>
        <end position="16"/>
    </location>
</feature>
<feature type="transmembrane region" description="Helical; Name=1" evidence="3">
    <location>
        <begin position="17"/>
        <end position="37"/>
    </location>
</feature>
<feature type="topological domain" description="Vacuolar" evidence="1">
    <location>
        <begin position="38"/>
        <end position="387"/>
    </location>
</feature>
<feature type="transmembrane region" description="Helical; Name=2" evidence="3">
    <location>
        <begin position="388"/>
        <end position="408"/>
    </location>
</feature>
<feature type="topological domain" description="Cytoplasmic" evidence="1">
    <location>
        <begin position="409"/>
        <end position="441"/>
    </location>
</feature>
<feature type="transmembrane region" description="Helical; Name=3" evidence="3">
    <location>
        <begin position="442"/>
        <end position="462"/>
    </location>
</feature>
<feature type="topological domain" description="Vacuolar" evidence="1">
    <location>
        <begin position="463"/>
        <end position="472"/>
    </location>
</feature>
<feature type="transmembrane region" description="Helical; Name=4" evidence="3">
    <location>
        <begin position="473"/>
        <end position="493"/>
    </location>
</feature>
<feature type="topological domain" description="Cytoplasmic" evidence="1">
    <location>
        <begin position="494"/>
        <end position="507"/>
    </location>
</feature>
<feature type="transmembrane region" description="Helical; Name=5" evidence="3">
    <location>
        <begin position="508"/>
        <end position="528"/>
    </location>
</feature>
<feature type="topological domain" description="Vacuolar" evidence="1">
    <location>
        <begin position="529"/>
        <end position="532"/>
    </location>
</feature>
<feature type="transmembrane region" description="Helical; Name=6" evidence="3">
    <location>
        <begin position="533"/>
        <end position="553"/>
    </location>
</feature>
<feature type="topological domain" description="Cytoplasmic" evidence="1">
    <location>
        <begin position="554"/>
        <end position="661"/>
    </location>
</feature>
<feature type="transmembrane region" description="Helical; Name=7" evidence="3">
    <location>
        <begin position="662"/>
        <end position="682"/>
    </location>
</feature>
<feature type="topological domain" description="Vacuolar" evidence="1">
    <location>
        <begin position="683"/>
        <end position="698"/>
    </location>
</feature>
<feature type="transmembrane region" description="Helical; Name=8" evidence="3">
    <location>
        <begin position="699"/>
        <end position="719"/>
    </location>
</feature>
<feature type="topological domain" description="Cytoplasmic" evidence="1">
    <location>
        <begin position="720"/>
        <end position="725"/>
    </location>
</feature>
<feature type="transmembrane region" description="Helical; Name=9" evidence="3">
    <location>
        <begin position="726"/>
        <end position="746"/>
    </location>
</feature>
<feature type="topological domain" description="Vacuolar" evidence="1">
    <location>
        <begin position="747"/>
        <end position="965"/>
    </location>
</feature>
<feature type="region of interest" description="Disordered" evidence="5">
    <location>
        <begin position="577"/>
        <end position="610"/>
    </location>
</feature>
<feature type="compositionally biased region" description="Acidic residues" evidence="5">
    <location>
        <begin position="591"/>
        <end position="604"/>
    </location>
</feature>
<feature type="active site" description="Proton acceptor" evidence="2">
    <location>
        <position position="217"/>
    </location>
</feature>
<feature type="binding site" evidence="2">
    <location>
        <position position="171"/>
    </location>
    <ligand>
        <name>Zn(2+)</name>
        <dbReference type="ChEBI" id="CHEBI:29105"/>
        <label>1</label>
        <note>catalytic</note>
    </ligand>
</feature>
<feature type="binding site" evidence="2">
    <location>
        <position position="183"/>
    </location>
    <ligand>
        <name>Zn(2+)</name>
        <dbReference type="ChEBI" id="CHEBI:29105"/>
        <label>1</label>
        <note>catalytic</note>
    </ligand>
</feature>
<feature type="binding site" evidence="2">
    <location>
        <position position="183"/>
    </location>
    <ligand>
        <name>Zn(2+)</name>
        <dbReference type="ChEBI" id="CHEBI:29105"/>
        <label>2</label>
        <note>catalytic</note>
    </ligand>
</feature>
<feature type="binding site" evidence="2">
    <location>
        <position position="218"/>
    </location>
    <ligand>
        <name>Zn(2+)</name>
        <dbReference type="ChEBI" id="CHEBI:29105"/>
        <label>2</label>
        <note>catalytic</note>
    </ligand>
</feature>
<feature type="binding site" evidence="2">
    <location>
        <position position="243"/>
    </location>
    <ligand>
        <name>Zn(2+)</name>
        <dbReference type="ChEBI" id="CHEBI:29105"/>
        <label>1</label>
        <note>catalytic</note>
    </ligand>
</feature>
<feature type="binding site" evidence="2">
    <location>
        <position position="316"/>
    </location>
    <ligand>
        <name>Zn(2+)</name>
        <dbReference type="ChEBI" id="CHEBI:29105"/>
        <label>2</label>
        <note>catalytic</note>
    </ligand>
</feature>
<feature type="site" description="Transition state stabilizer" evidence="2">
    <location>
        <position position="315"/>
    </location>
</feature>
<feature type="glycosylation site" description="N-linked (GlcNAc...) asparagine" evidence="4">
    <location>
        <position position="53"/>
    </location>
</feature>
<feature type="glycosylation site" description="N-linked (GlcNAc...) asparagine" evidence="4">
    <location>
        <position position="119"/>
    </location>
</feature>
<feature type="glycosylation site" description="N-linked (GlcNAc...) asparagine" evidence="4">
    <location>
        <position position="793"/>
    </location>
</feature>
<feature type="glycosylation site" description="N-linked (GlcNAc...) asparagine" evidence="4">
    <location>
        <position position="830"/>
    </location>
</feature>
<sequence length="965" mass="106578">MARPSLSPSNPLGFTPWPVTVITAVVYLALVVPLLVVHHVVPSAPSSSPKGLNLTEAWADLQELTHGFHPYNSHRNDEVHEWLLKRILELIDSAPPASEYGSVGEEKPDIVVFDDTQSNLTFSGRGSGLGVYFESTNIMVYIRGWEEDRERWWEDPHGRPAGKGGVLVNAHYDSVSTGYGATDDGVGVVSCLQLIKYFTTPGHVPRRGLVLLFNNGEEDFLNGARVYSQHPISQLPHTFLNLEGAGAGGRATLFRSSDAEVTKPYMRAPHPFGSVLSANGFEAGLISSQTDYVVFEGDLGLRGLDVAFMEPRARYHTDEDDARHTSLASVWHMLSAAVATTEGLVSDASSRFEGLPREDGRIASGSGPKGVWFDLFGSAFVVFELHTLFALSVTLLVVAPLVLLVTSIALARADKMYLFRSSASPEDSDGSEVVPLHGVRGFFRFPFLLVIPTAVTVGLAYLVTKFNPYIIHSSEYAVWSMMISAWVFLAWFVSRVADFARPSAFHRVYTLTWLFLVEWVFLVISTVYENQYGLAGGYFVLFVFAGTFLATWISYLELFALPRKSDYATQLALPSRRTSSHGSRLGTASGEDVEDGEDEDDDGTTAEATETTSLLRGQRTTFANYVRVTGDYLRDDDEEPRQPNLYGHEQAWSIHLPKWVWVLQFLLTAPLVLIFVGPLALLLTSALRQTGQDGSPSLFIYIAVAALTTLLFIPLLPFIHRYTHHIPLFLLCVFAGTLIYNLVAFPFSPANRLKLFFIQEVDLDTGVNHASLSGAYPFVHDVARRLPSTAGQNITCDLAMLRPKCSWHGIPPQVVQPAAASKMEDWLSYNITKSDSEPKAQLSISGRNTRACKVVFDRPVLDFQVADSAYDPRFPHVSPDGTKEIRLWSREWGHTWTVDVEWAADAEETDEKGPGLSGRVVCLWSDGNSAGVIPALDEVRRYAPVWAGVSKLSDGLVEGSRRFEV</sequence>
<gene>
    <name type="ORF">AFUB_006350</name>
</gene>
<organism>
    <name type="scientific">Aspergillus fumigatus (strain CBS 144.89 / FGSC A1163 / CEA10)</name>
    <name type="common">Neosartorya fumigata</name>
    <dbReference type="NCBI Taxonomy" id="451804"/>
    <lineage>
        <taxon>Eukaryota</taxon>
        <taxon>Fungi</taxon>
        <taxon>Dikarya</taxon>
        <taxon>Ascomycota</taxon>
        <taxon>Pezizomycotina</taxon>
        <taxon>Eurotiomycetes</taxon>
        <taxon>Eurotiomycetidae</taxon>
        <taxon>Eurotiales</taxon>
        <taxon>Aspergillaceae</taxon>
        <taxon>Aspergillus</taxon>
        <taxon>Aspergillus subgen. Fumigati</taxon>
    </lineage>
</organism>
<proteinExistence type="inferred from homology"/>
<name>PFF1_ASPFC</name>